<sequence>MHPASESSHITRLAESIVANTAIVNAYLCEQNLPLPRFDDINAAVRPCTADDASAESARRAVVTASQELRDLLSGPSAPLMVDWTAHSCLRTIVHFRLAEAVSLVPANDIGTSFANIAAQTSLSETHVTRILRHAMTRHIFREPAPGFVAHTAASALLSRDSVTRDVVGLITDEMWPAGLKVPEALARWPNSQEPEETGFSMANAQGSEEQKKSMWSVYEEDAERARRFGVCMSVENSAMPFPLEELEWQGLVVDIGGGVGFNVFNLAEKHQNARFIVEDLSKTVQQGRLLLPKQLKDRVDFVEHDFFSPQPVKDADIYFFRRIFHDWSDKHAVEIIRSLIPALKPGARVRVNELLVPKPGELPREIEKMARNSDFAMLALLNGKERNNEEWQALFRAASDKFRFGFCKTTPPGLMAVIEFVWEP</sequence>
<evidence type="ECO:0000250" key="1">
    <source>
        <dbReference type="UniProtKB" id="D7PI16"/>
    </source>
</evidence>
<evidence type="ECO:0000250" key="2">
    <source>
        <dbReference type="UniProtKB" id="O04385"/>
    </source>
</evidence>
<evidence type="ECO:0000255" key="3">
    <source>
        <dbReference type="PROSITE-ProRule" id="PRU01020"/>
    </source>
</evidence>
<evidence type="ECO:0000269" key="4">
    <source>
    </source>
</evidence>
<evidence type="ECO:0000269" key="5">
    <source>
    </source>
</evidence>
<evidence type="ECO:0000269" key="6">
    <source>
    </source>
</evidence>
<evidence type="ECO:0000303" key="7">
    <source>
    </source>
</evidence>
<evidence type="ECO:0000303" key="8">
    <source>
    </source>
</evidence>
<evidence type="ECO:0000305" key="9">
    <source>
    </source>
</evidence>
<evidence type="ECO:0000305" key="10">
    <source>
    </source>
</evidence>
<accession>C9K7C0</accession>
<dbReference type="EC" id="2.1.1.-" evidence="3"/>
<dbReference type="EMBL" id="AB525198">
    <property type="protein sequence ID" value="BAI44744.1"/>
    <property type="molecule type" value="Genomic_DNA"/>
</dbReference>
<dbReference type="EMBL" id="AB525199">
    <property type="protein sequence ID" value="BAI44767.1"/>
    <property type="molecule type" value="Genomic_DNA"/>
</dbReference>
<dbReference type="EMBL" id="AB525200">
    <property type="protein sequence ID" value="BAI44809.1"/>
    <property type="molecule type" value="Genomic_DNA"/>
</dbReference>
<dbReference type="SMR" id="C9K7C0"/>
<dbReference type="VEuPathDB" id="FungiDB:CC77DRAFT_695318"/>
<dbReference type="GO" id="GO:0008171">
    <property type="term" value="F:O-methyltransferase activity"/>
    <property type="evidence" value="ECO:0007669"/>
    <property type="project" value="InterPro"/>
</dbReference>
<dbReference type="GO" id="GO:0032259">
    <property type="term" value="P:methylation"/>
    <property type="evidence" value="ECO:0007669"/>
    <property type="project" value="UniProtKB-KW"/>
</dbReference>
<dbReference type="GO" id="GO:0044550">
    <property type="term" value="P:secondary metabolite biosynthetic process"/>
    <property type="evidence" value="ECO:0007669"/>
    <property type="project" value="UniProtKB-ARBA"/>
</dbReference>
<dbReference type="CDD" id="cd02440">
    <property type="entry name" value="AdoMet_MTases"/>
    <property type="match status" value="1"/>
</dbReference>
<dbReference type="Gene3D" id="3.40.50.150">
    <property type="entry name" value="Vaccinia Virus protein VP39"/>
    <property type="match status" value="1"/>
</dbReference>
<dbReference type="Gene3D" id="1.10.10.10">
    <property type="entry name" value="Winged helix-like DNA-binding domain superfamily/Winged helix DNA-binding domain"/>
    <property type="match status" value="1"/>
</dbReference>
<dbReference type="InterPro" id="IPR016461">
    <property type="entry name" value="COMT-like"/>
</dbReference>
<dbReference type="InterPro" id="IPR001077">
    <property type="entry name" value="O_MeTrfase_dom"/>
</dbReference>
<dbReference type="InterPro" id="IPR029063">
    <property type="entry name" value="SAM-dependent_MTases_sf"/>
</dbReference>
<dbReference type="InterPro" id="IPR036388">
    <property type="entry name" value="WH-like_DNA-bd_sf"/>
</dbReference>
<dbReference type="InterPro" id="IPR036390">
    <property type="entry name" value="WH_DNA-bd_sf"/>
</dbReference>
<dbReference type="PANTHER" id="PTHR43712:SF16">
    <property type="entry name" value="O-METHYLTRANSFERASE ELCB"/>
    <property type="match status" value="1"/>
</dbReference>
<dbReference type="PANTHER" id="PTHR43712">
    <property type="entry name" value="PUTATIVE (AFU_ORTHOLOGUE AFUA_4G14580)-RELATED"/>
    <property type="match status" value="1"/>
</dbReference>
<dbReference type="Pfam" id="PF00891">
    <property type="entry name" value="Methyltransf_2"/>
    <property type="match status" value="1"/>
</dbReference>
<dbReference type="SUPFAM" id="SSF53335">
    <property type="entry name" value="S-adenosyl-L-methionine-dependent methyltransferases"/>
    <property type="match status" value="1"/>
</dbReference>
<dbReference type="SUPFAM" id="SSF46785">
    <property type="entry name" value="Winged helix' DNA-binding domain"/>
    <property type="match status" value="1"/>
</dbReference>
<dbReference type="PROSITE" id="PS51683">
    <property type="entry name" value="SAM_OMT_II"/>
    <property type="match status" value="1"/>
</dbReference>
<protein>
    <recommendedName>
        <fullName evidence="1">O-methyltransferase AMT9</fullName>
        <ecNumber evidence="3">2.1.1.-</ecNumber>
    </recommendedName>
    <alternativeName>
        <fullName evidence="7">AM-toxin biosynthesis protein 9</fullName>
    </alternativeName>
</protein>
<keyword id="KW-0489">Methyltransferase</keyword>
<keyword id="KW-0949">S-adenosyl-L-methionine</keyword>
<keyword id="KW-0808">Transferase</keyword>
<keyword id="KW-0843">Virulence</keyword>
<proteinExistence type="evidence at transcript level"/>
<comment type="function">
    <text evidence="4 5 6 8 9 10">O-methyltransferase; part of the gene clusters that mediate the biosynthesis of AM-toxins, host-selective toxins (HSTs) causing Alternaria blotch on apple, a worldwide distributed disease (Probable). AM-toxins are cyclic depsipeptides containing the 3 residues 2-hydroxy-isovaleric acid (2-HIV), dehydroalanine, L-alanine which are common for all 3 AM-toxins I to III. The fourth precursor is L-alpha-amino-methoxyphenyl-valeric acid (L-Amv) for AM-toxin I, L-alpha-amino-phenyl-valeric acid (L-Apv) for AM-toxin II, and L-alpha-amino-hydroxyphenyl-valeric acid (L-Ahv) for AM-toxin III (Probable). AM-toxins have two target sites for affecting susceptible apple cells; they cause invagination of the plasma membrane and electrolyte loss and chloroplast disorganization (PubMed:22846083). The non-ribosomal peptide synthetase AMT1 contains 4 catalytic modules and is responsible for activation of each residue in AM-toxin (PubMed:10875335). The aldo-keto reductase AMT2 catalyzes the conversion of 2-keto-isovaleric acid (2-KIV) to 2-hydroxy-isovaleric acid (2-HIV), one of the precursor residues incorporated by AMT1 during AM-toxin biosynthesis, by reduction of its ketone to an alcohol (PubMed:15066029). The cytochrome P450 monooxygenase AMT3 and the thioesterase AMT4 are also important for AM-toxin production, but their exact function within the AM-toxin biosynthesis are not known yet (PubMed:17990954). Up to 21 proteins (including AMT1 to AMT4) are predicted to be involved in AM-toxin biosynthesis since their expression ishighly up-regulated in AM-toxin-producing cultures (PubMed:17990954).</text>
</comment>
<comment type="pathway">
    <text evidence="10">Mycotoxin biosynthesis.</text>
</comment>
<comment type="induction">
    <text evidence="6">Expression is up-regulated more than 10 fold in toxin producing cultures.</text>
</comment>
<comment type="miscellaneous">
    <text evidence="6">Gene clusters encoding host-selective toxins (HSTs) are localized on conditionally dispensable chromosomes (CDCs), also called supernumerary chromosomes, where they are present in multiple copies (PubMed:17990954). The CDCs are not essential for saprophytic growth but controls host-selective pathogenicity (PubMed:17990954).</text>
</comment>
<comment type="similarity">
    <text evidence="3">Belongs to the class I-like SAM-binding methyltransferase superfamily. Cation-independent O-methyltransferase family.</text>
</comment>
<reference key="1">
    <citation type="journal article" date="2007" name="Mol. Plant Microbe Interact.">
        <title>Expression profiles of genes encoded by the supernumerary chromosome controlling AM-toxin biosynthesis and pathogenicity in the apple pathotype of Alternaria alternata.</title>
        <authorList>
            <person name="Harimoto Y."/>
            <person name="Hatta R."/>
            <person name="Kodama M."/>
            <person name="Yamamoto M."/>
            <person name="Otani H."/>
            <person name="Tsuge T."/>
        </authorList>
    </citation>
    <scope>NUCLEOTIDE SEQUENCE [GENOMIC DNA]</scope>
    <scope>INDUCTION</scope>
    <scope>PATHWAY</scope>
    <source>
        <strain>NBRC 8984</strain>
    </source>
</reference>
<reference key="2">
    <citation type="journal article" date="2000" name="Mol. Plant Microbe Interact.">
        <title>Cloning and characterization of a cyclic peptide synthetase gene from Alternaria alternata apple pathotype whose product is involved in AM-toxin synthesis and pathogenicity.</title>
        <authorList>
            <person name="Johnson R.D."/>
            <person name="Johnson L."/>
            <person name="Itoh Y."/>
            <person name="Kodama M."/>
            <person name="Otani H."/>
            <person name="Kohmoto K."/>
        </authorList>
    </citation>
    <scope>FUNCTION</scope>
    <source>
        <strain>M-71</strain>
    </source>
</reference>
<reference key="3">
    <citation type="journal article" date="2004" name="Mol. Microbiol.">
        <title>Dissection of the host range of the fungal plant pathogen Alternaria alternata by modification of secondary metabolism.</title>
        <authorList>
            <person name="Ito K."/>
            <person name="Tanaka T."/>
            <person name="Hatta R."/>
            <person name="Yamamoto M."/>
            <person name="Akimitsu K."/>
            <person name="Tsuge T."/>
        </authorList>
    </citation>
    <scope>FUNCTION</scope>
    <source>
        <strain>NBRC 8984</strain>
    </source>
</reference>
<reference key="4">
    <citation type="journal article" date="2013" name="FEMS Microbiol. Rev.">
        <title>Host-selective toxins produced by the plant pathogenic fungus Alternaria alternata.</title>
        <authorList>
            <person name="Tsuge T."/>
            <person name="Harimoto Y."/>
            <person name="Akimitsu K."/>
            <person name="Ohtani K."/>
            <person name="Kodama M."/>
            <person name="Akagi Y."/>
            <person name="Egusa M."/>
            <person name="Yamamoto M."/>
            <person name="Otani H."/>
        </authorList>
    </citation>
    <scope>REVIEW ON HOST-SELECTIVE TOXINS</scope>
</reference>
<feature type="chain" id="PRO_0000444858" description="O-methyltransferase AMT9">
    <location>
        <begin position="1"/>
        <end position="425"/>
    </location>
</feature>
<feature type="active site" description="Proton acceptor" evidence="3">
    <location>
        <position position="326"/>
    </location>
</feature>
<feature type="binding site" evidence="2">
    <location>
        <begin position="257"/>
        <end position="258"/>
    </location>
    <ligand>
        <name>S-adenosyl-L-methionine</name>
        <dbReference type="ChEBI" id="CHEBI:59789"/>
    </ligand>
</feature>
<feature type="binding site" evidence="3">
    <location>
        <position position="280"/>
    </location>
    <ligand>
        <name>S-adenosyl-L-methionine</name>
        <dbReference type="ChEBI" id="CHEBI:59789"/>
    </ligand>
</feature>
<feature type="binding site" evidence="2">
    <location>
        <begin position="306"/>
        <end position="307"/>
    </location>
    <ligand>
        <name>S-adenosyl-L-methionine</name>
        <dbReference type="ChEBI" id="CHEBI:59789"/>
    </ligand>
</feature>
<feature type="binding site" evidence="2">
    <location>
        <position position="322"/>
    </location>
    <ligand>
        <name>S-adenosyl-L-methionine</name>
        <dbReference type="ChEBI" id="CHEBI:59789"/>
    </ligand>
</feature>
<feature type="binding site" evidence="3">
    <location>
        <position position="323"/>
    </location>
    <ligand>
        <name>S-adenosyl-L-methionine</name>
        <dbReference type="ChEBI" id="CHEBI:59789"/>
    </ligand>
</feature>
<name>AMT9_ALTAL</name>
<organism>
    <name type="scientific">Alternaria alternata</name>
    <name type="common">Alternaria rot fungus</name>
    <name type="synonym">Torula alternata</name>
    <dbReference type="NCBI Taxonomy" id="5599"/>
    <lineage>
        <taxon>Eukaryota</taxon>
        <taxon>Fungi</taxon>
        <taxon>Dikarya</taxon>
        <taxon>Ascomycota</taxon>
        <taxon>Pezizomycotina</taxon>
        <taxon>Dothideomycetes</taxon>
        <taxon>Pleosporomycetidae</taxon>
        <taxon>Pleosporales</taxon>
        <taxon>Pleosporineae</taxon>
        <taxon>Pleosporaceae</taxon>
        <taxon>Alternaria</taxon>
        <taxon>Alternaria sect. Alternaria</taxon>
        <taxon>Alternaria alternata complex</taxon>
    </lineage>
</organism>
<gene>
    <name evidence="7" type="primary">AMT9</name>
</gene>